<organism>
    <name type="scientific">Streptococcus pyogenes serotype M28 (strain MGAS6180)</name>
    <dbReference type="NCBI Taxonomy" id="319701"/>
    <lineage>
        <taxon>Bacteria</taxon>
        <taxon>Bacillati</taxon>
        <taxon>Bacillota</taxon>
        <taxon>Bacilli</taxon>
        <taxon>Lactobacillales</taxon>
        <taxon>Streptococcaceae</taxon>
        <taxon>Streptococcus</taxon>
    </lineage>
</organism>
<proteinExistence type="inferred from homology"/>
<name>TRHO_STRPM</name>
<sequence>MSEKIRVLLYYKYVSIENAQEYAAKHLEFCKSIGLKGRILIADEGINGTVSGDYETTQKYMDWVHSDERFADLWFKIDEENQQAFRKMFVRYKKEIVHLGLEDNNFDSDINPLETTGEYLNPKQFKEALLDEDTVVLDTRNDYEYDLGHFRGAIRPDIRNFRELPQWVRDNKDKFMEKRVVVYCTGGVRCEKFSGWMVREGFKDVGQLHGGIATYGKDPEVQGELWDGAMYVFDDRISVPINHVNPTVISKDYFDGTPCERYVNCANPFCNKQIFASEENETKYVRGCSPECRAHERNRYVQENGLSRQGWAERLEAIGESLPEFVGA</sequence>
<gene>
    <name evidence="1" type="primary">trhO</name>
    <name type="ordered locus">M28_Spy0697</name>
</gene>
<protein>
    <recommendedName>
        <fullName evidence="1">tRNA uridine(34) hydroxylase</fullName>
        <ecNumber evidence="1">1.14.-.-</ecNumber>
    </recommendedName>
    <alternativeName>
        <fullName evidence="1">tRNA hydroxylation protein O</fullName>
    </alternativeName>
</protein>
<keyword id="KW-0560">Oxidoreductase</keyword>
<keyword id="KW-0819">tRNA processing</keyword>
<reference key="1">
    <citation type="journal article" date="2005" name="J. Infect. Dis.">
        <title>Genome sequence of a serotype M28 strain of group A Streptococcus: potential new insights into puerperal sepsis and bacterial disease specificity.</title>
        <authorList>
            <person name="Green N.M."/>
            <person name="Zhang S."/>
            <person name="Porcella S.F."/>
            <person name="Nagiec M.J."/>
            <person name="Barbian K.D."/>
            <person name="Beres S.B."/>
            <person name="Lefebvre R.B."/>
            <person name="Musser J.M."/>
        </authorList>
    </citation>
    <scope>NUCLEOTIDE SEQUENCE [LARGE SCALE GENOMIC DNA]</scope>
    <source>
        <strain>MGAS6180</strain>
    </source>
</reference>
<feature type="chain" id="PRO_0000242950" description="tRNA uridine(34) hydroxylase">
    <location>
        <begin position="1"/>
        <end position="328"/>
    </location>
</feature>
<feature type="domain" description="Rhodanese" evidence="1">
    <location>
        <begin position="130"/>
        <end position="224"/>
    </location>
</feature>
<feature type="active site" description="Cysteine persulfide intermediate" evidence="1">
    <location>
        <position position="184"/>
    </location>
</feature>
<evidence type="ECO:0000255" key="1">
    <source>
        <dbReference type="HAMAP-Rule" id="MF_00469"/>
    </source>
</evidence>
<comment type="function">
    <text evidence="1">Catalyzes oxygen-dependent 5-hydroxyuridine (ho5U) modification at position 34 in tRNAs.</text>
</comment>
<comment type="catalytic activity">
    <reaction evidence="1">
        <text>uridine(34) in tRNA + AH2 + O2 = 5-hydroxyuridine(34) in tRNA + A + H2O</text>
        <dbReference type="Rhea" id="RHEA:64224"/>
        <dbReference type="Rhea" id="RHEA-COMP:11727"/>
        <dbReference type="Rhea" id="RHEA-COMP:13381"/>
        <dbReference type="ChEBI" id="CHEBI:13193"/>
        <dbReference type="ChEBI" id="CHEBI:15377"/>
        <dbReference type="ChEBI" id="CHEBI:15379"/>
        <dbReference type="ChEBI" id="CHEBI:17499"/>
        <dbReference type="ChEBI" id="CHEBI:65315"/>
        <dbReference type="ChEBI" id="CHEBI:136877"/>
    </reaction>
</comment>
<comment type="similarity">
    <text evidence="1">Belongs to the TrhO family.</text>
</comment>
<accession>Q48TZ6</accession>
<dbReference type="EC" id="1.14.-.-" evidence="1"/>
<dbReference type="EMBL" id="CP000056">
    <property type="protein sequence ID" value="AAX71810.1"/>
    <property type="molecule type" value="Genomic_DNA"/>
</dbReference>
<dbReference type="RefSeq" id="WP_011284718.1">
    <property type="nucleotide sequence ID" value="NC_007296.2"/>
</dbReference>
<dbReference type="SMR" id="Q48TZ6"/>
<dbReference type="KEGG" id="spb:M28_Spy0697"/>
<dbReference type="HOGENOM" id="CLU_038878_1_0_9"/>
<dbReference type="GO" id="GO:0016705">
    <property type="term" value="F:oxidoreductase activity, acting on paired donors, with incorporation or reduction of molecular oxygen"/>
    <property type="evidence" value="ECO:0007669"/>
    <property type="project" value="UniProtKB-UniRule"/>
</dbReference>
<dbReference type="GO" id="GO:0006400">
    <property type="term" value="P:tRNA modification"/>
    <property type="evidence" value="ECO:0007669"/>
    <property type="project" value="UniProtKB-UniRule"/>
</dbReference>
<dbReference type="CDD" id="cd01518">
    <property type="entry name" value="RHOD_YceA"/>
    <property type="match status" value="1"/>
</dbReference>
<dbReference type="Gene3D" id="3.30.70.100">
    <property type="match status" value="1"/>
</dbReference>
<dbReference type="Gene3D" id="3.40.250.10">
    <property type="entry name" value="Rhodanese-like domain"/>
    <property type="match status" value="1"/>
</dbReference>
<dbReference type="HAMAP" id="MF_00469">
    <property type="entry name" value="TrhO"/>
    <property type="match status" value="1"/>
</dbReference>
<dbReference type="InterPro" id="IPR001763">
    <property type="entry name" value="Rhodanese-like_dom"/>
</dbReference>
<dbReference type="InterPro" id="IPR036873">
    <property type="entry name" value="Rhodanese-like_dom_sf"/>
</dbReference>
<dbReference type="InterPro" id="IPR022111">
    <property type="entry name" value="Rhodanese_C"/>
</dbReference>
<dbReference type="InterPro" id="IPR020936">
    <property type="entry name" value="TrhO"/>
</dbReference>
<dbReference type="InterPro" id="IPR040503">
    <property type="entry name" value="TRHO_N"/>
</dbReference>
<dbReference type="NCBIfam" id="NF001135">
    <property type="entry name" value="PRK00142.1-3"/>
    <property type="match status" value="1"/>
</dbReference>
<dbReference type="NCBIfam" id="NF001137">
    <property type="entry name" value="PRK00142.1-5"/>
    <property type="match status" value="1"/>
</dbReference>
<dbReference type="PANTHER" id="PTHR43268:SF3">
    <property type="entry name" value="RHODANESE-LIKE DOMAIN-CONTAINING PROTEIN 7-RELATED"/>
    <property type="match status" value="1"/>
</dbReference>
<dbReference type="PANTHER" id="PTHR43268">
    <property type="entry name" value="THIOSULFATE SULFURTRANSFERASE/RHODANESE-LIKE DOMAIN-CONTAINING PROTEIN 2"/>
    <property type="match status" value="1"/>
</dbReference>
<dbReference type="Pfam" id="PF00581">
    <property type="entry name" value="Rhodanese"/>
    <property type="match status" value="1"/>
</dbReference>
<dbReference type="Pfam" id="PF12368">
    <property type="entry name" value="Rhodanese_C"/>
    <property type="match status" value="1"/>
</dbReference>
<dbReference type="Pfam" id="PF17773">
    <property type="entry name" value="UPF0176_N"/>
    <property type="match status" value="1"/>
</dbReference>
<dbReference type="SMART" id="SM00450">
    <property type="entry name" value="RHOD"/>
    <property type="match status" value="1"/>
</dbReference>
<dbReference type="SUPFAM" id="SSF52821">
    <property type="entry name" value="Rhodanese/Cell cycle control phosphatase"/>
    <property type="match status" value="1"/>
</dbReference>
<dbReference type="PROSITE" id="PS50206">
    <property type="entry name" value="RHODANESE_3"/>
    <property type="match status" value="1"/>
</dbReference>